<keyword id="KW-0963">Cytoplasm</keyword>
<keyword id="KW-0441">Lipid A biosynthesis</keyword>
<keyword id="KW-0444">Lipid biosynthesis</keyword>
<keyword id="KW-0443">Lipid metabolism</keyword>
<keyword id="KW-0456">Lyase</keyword>
<evidence type="ECO:0000255" key="1">
    <source>
        <dbReference type="HAMAP-Rule" id="MF_00406"/>
    </source>
</evidence>
<evidence type="ECO:0000305" key="2"/>
<reference key="1">
    <citation type="journal article" date="2002" name="Proc. Natl. Acad. Sci. U.S.A.">
        <title>Genome sequence of a serotype M3 strain of group A Streptococcus: phage-encoded toxins, the high-virulence phenotype, and clone emergence.</title>
        <authorList>
            <person name="Beres S.B."/>
            <person name="Sylva G.L."/>
            <person name="Barbian K.D."/>
            <person name="Lei B."/>
            <person name="Hoff J.S."/>
            <person name="Mammarella N.D."/>
            <person name="Liu M.-Y."/>
            <person name="Smoot J.C."/>
            <person name="Porcella S.F."/>
            <person name="Parkins L.D."/>
            <person name="Campbell D.S."/>
            <person name="Smith T.M."/>
            <person name="McCormick J.K."/>
            <person name="Leung D.Y.M."/>
            <person name="Schlievert P.M."/>
            <person name="Musser J.M."/>
        </authorList>
    </citation>
    <scope>NUCLEOTIDE SEQUENCE [LARGE SCALE GENOMIC DNA]</scope>
    <source>
        <strain>ATCC BAA-595 / MGAS315</strain>
    </source>
</reference>
<comment type="function">
    <text evidence="1">Involved in unsaturated fatty acids biosynthesis. Catalyzes the dehydration of short chain beta-hydroxyacyl-ACPs and long chain saturated and unsaturated beta-hydroxyacyl-ACPs.</text>
</comment>
<comment type="catalytic activity">
    <reaction evidence="1">
        <text>a (3R)-hydroxyacyl-[ACP] = a (2E)-enoyl-[ACP] + H2O</text>
        <dbReference type="Rhea" id="RHEA:13097"/>
        <dbReference type="Rhea" id="RHEA-COMP:9925"/>
        <dbReference type="Rhea" id="RHEA-COMP:9945"/>
        <dbReference type="ChEBI" id="CHEBI:15377"/>
        <dbReference type="ChEBI" id="CHEBI:78784"/>
        <dbReference type="ChEBI" id="CHEBI:78827"/>
        <dbReference type="EC" id="4.2.1.59"/>
    </reaction>
</comment>
<comment type="subcellular location">
    <subcellularLocation>
        <location evidence="1">Cytoplasm</location>
    </subcellularLocation>
</comment>
<comment type="similarity">
    <text evidence="1">Belongs to the thioester dehydratase family. FabZ subfamily.</text>
</comment>
<comment type="sequence caution" evidence="2">
    <conflict type="erroneous initiation">
        <sequence resource="EMBL-CDS" id="AAM80127"/>
    </conflict>
</comment>
<feature type="chain" id="PRO_0000091744" description="3-hydroxyacyl-[acyl-carrier-protein] dehydratase FabZ">
    <location>
        <begin position="1"/>
        <end position="139"/>
    </location>
</feature>
<feature type="active site" evidence="1">
    <location>
        <position position="46"/>
    </location>
</feature>
<organism>
    <name type="scientific">Streptococcus pyogenes serotype M3 (strain ATCC BAA-595 / MGAS315)</name>
    <dbReference type="NCBI Taxonomy" id="198466"/>
    <lineage>
        <taxon>Bacteria</taxon>
        <taxon>Bacillati</taxon>
        <taxon>Bacillota</taxon>
        <taxon>Bacilli</taxon>
        <taxon>Lactobacillales</taxon>
        <taxon>Streptococcaceae</taxon>
        <taxon>Streptococcus</taxon>
    </lineage>
</organism>
<accession>P0DB02</accession>
<accession>Q8K631</accession>
<sequence>MDIREIQAALPHRYPMLLVDRVLEVSDDHIVAIKNVTINEPFFNGHFPHYPVMPGVLIMEALAQTAGVLELSKEENKSKLVFYAGMDKVKFKKQVVPGDQLVMTATFIKRRGTIAVVEARAEVDGKLAASGTLTFACGQ</sequence>
<proteinExistence type="inferred from homology"/>
<protein>
    <recommendedName>
        <fullName evidence="1">3-hydroxyacyl-[acyl-carrier-protein] dehydratase FabZ</fullName>
        <ecNumber evidence="1">4.2.1.59</ecNumber>
    </recommendedName>
    <alternativeName>
        <fullName evidence="1">(3R)-hydroxymyristoyl-[acyl-carrier-protein] dehydratase</fullName>
        <shortName evidence="1">(3R)-hydroxymyristoyl-ACP dehydrase</shortName>
    </alternativeName>
    <alternativeName>
        <fullName evidence="1">Beta-hydroxyacyl-ACP dehydratase</fullName>
    </alternativeName>
</protein>
<name>FABZ_STRP3</name>
<dbReference type="EC" id="4.2.1.59" evidence="1"/>
<dbReference type="EMBL" id="AE014074">
    <property type="protein sequence ID" value="AAM80127.1"/>
    <property type="status" value="ALT_INIT"/>
    <property type="molecule type" value="Genomic_DNA"/>
</dbReference>
<dbReference type="SMR" id="P0DB02"/>
<dbReference type="KEGG" id="spg:SpyM3_1520"/>
<dbReference type="HOGENOM" id="CLU_078912_1_2_9"/>
<dbReference type="Proteomes" id="UP000000564">
    <property type="component" value="Chromosome"/>
</dbReference>
<dbReference type="GO" id="GO:0005737">
    <property type="term" value="C:cytoplasm"/>
    <property type="evidence" value="ECO:0007669"/>
    <property type="project" value="UniProtKB-SubCell"/>
</dbReference>
<dbReference type="GO" id="GO:0016020">
    <property type="term" value="C:membrane"/>
    <property type="evidence" value="ECO:0007669"/>
    <property type="project" value="GOC"/>
</dbReference>
<dbReference type="GO" id="GO:0019171">
    <property type="term" value="F:(3R)-hydroxyacyl-[acyl-carrier-protein] dehydratase activity"/>
    <property type="evidence" value="ECO:0007669"/>
    <property type="project" value="UniProtKB-EC"/>
</dbReference>
<dbReference type="GO" id="GO:0006633">
    <property type="term" value="P:fatty acid biosynthetic process"/>
    <property type="evidence" value="ECO:0007669"/>
    <property type="project" value="UniProtKB-UniRule"/>
</dbReference>
<dbReference type="GO" id="GO:0009245">
    <property type="term" value="P:lipid A biosynthetic process"/>
    <property type="evidence" value="ECO:0007669"/>
    <property type="project" value="UniProtKB-UniRule"/>
</dbReference>
<dbReference type="CDD" id="cd01288">
    <property type="entry name" value="FabZ"/>
    <property type="match status" value="1"/>
</dbReference>
<dbReference type="FunFam" id="3.10.129.10:FF:000001">
    <property type="entry name" value="3-hydroxyacyl-[acyl-carrier-protein] dehydratase FabZ"/>
    <property type="match status" value="1"/>
</dbReference>
<dbReference type="Gene3D" id="3.10.129.10">
    <property type="entry name" value="Hotdog Thioesterase"/>
    <property type="match status" value="1"/>
</dbReference>
<dbReference type="HAMAP" id="MF_00406">
    <property type="entry name" value="FabZ"/>
    <property type="match status" value="1"/>
</dbReference>
<dbReference type="InterPro" id="IPR013114">
    <property type="entry name" value="FabA_FabZ"/>
</dbReference>
<dbReference type="InterPro" id="IPR010084">
    <property type="entry name" value="FabZ"/>
</dbReference>
<dbReference type="InterPro" id="IPR029069">
    <property type="entry name" value="HotDog_dom_sf"/>
</dbReference>
<dbReference type="NCBIfam" id="TIGR01750">
    <property type="entry name" value="fabZ"/>
    <property type="match status" value="1"/>
</dbReference>
<dbReference type="NCBIfam" id="NF000582">
    <property type="entry name" value="PRK00006.1"/>
    <property type="match status" value="1"/>
</dbReference>
<dbReference type="PANTHER" id="PTHR30272">
    <property type="entry name" value="3-HYDROXYACYL-[ACYL-CARRIER-PROTEIN] DEHYDRATASE"/>
    <property type="match status" value="1"/>
</dbReference>
<dbReference type="PANTHER" id="PTHR30272:SF1">
    <property type="entry name" value="3-HYDROXYACYL-[ACYL-CARRIER-PROTEIN] DEHYDRATASE"/>
    <property type="match status" value="1"/>
</dbReference>
<dbReference type="Pfam" id="PF07977">
    <property type="entry name" value="FabA"/>
    <property type="match status" value="1"/>
</dbReference>
<dbReference type="SUPFAM" id="SSF54637">
    <property type="entry name" value="Thioesterase/thiol ester dehydrase-isomerase"/>
    <property type="match status" value="1"/>
</dbReference>
<gene>
    <name evidence="1" type="primary">fabZ</name>
    <name type="ordered locus">SpyM3_1520</name>
</gene>